<dbReference type="EC" id="1.14.11.-" evidence="2"/>
<dbReference type="EC" id="1.14.13.-" evidence="1"/>
<dbReference type="EMBL" id="AB010068">
    <property type="protein sequence ID" value="BAB11205.1"/>
    <property type="molecule type" value="Genomic_DNA"/>
</dbReference>
<dbReference type="EMBL" id="CP002688">
    <property type="protein sequence ID" value="AED93322.1"/>
    <property type="molecule type" value="Genomic_DNA"/>
</dbReference>
<dbReference type="EMBL" id="AF386975">
    <property type="protein sequence ID" value="AAK62420.1"/>
    <property type="molecule type" value="mRNA"/>
</dbReference>
<dbReference type="EMBL" id="AY081455">
    <property type="protein sequence ID" value="AAM10017.1"/>
    <property type="molecule type" value="mRNA"/>
</dbReference>
<dbReference type="EMBL" id="AY085392">
    <property type="protein sequence ID" value="AAM62620.1"/>
    <property type="molecule type" value="mRNA"/>
</dbReference>
<dbReference type="RefSeq" id="NP_197841.1">
    <property type="nucleotide sequence ID" value="NM_122361.4"/>
</dbReference>
<dbReference type="SMR" id="Q9FLV0"/>
<dbReference type="FunCoup" id="Q9FLV0">
    <property type="interactions" value="26"/>
</dbReference>
<dbReference type="IntAct" id="Q9FLV0">
    <property type="interactions" value="1"/>
</dbReference>
<dbReference type="STRING" id="3702.Q9FLV0"/>
<dbReference type="iPTMnet" id="Q9FLV0"/>
<dbReference type="PaxDb" id="3702-AT5G24530.1"/>
<dbReference type="ProteomicsDB" id="224289"/>
<dbReference type="EnsemblPlants" id="AT5G24530.1">
    <property type="protein sequence ID" value="AT5G24530.1"/>
    <property type="gene ID" value="AT5G24530"/>
</dbReference>
<dbReference type="GeneID" id="832524"/>
<dbReference type="Gramene" id="AT5G24530.1">
    <property type="protein sequence ID" value="AT5G24530.1"/>
    <property type="gene ID" value="AT5G24530"/>
</dbReference>
<dbReference type="KEGG" id="ath:AT5G24530"/>
<dbReference type="Araport" id="AT5G24530"/>
<dbReference type="TAIR" id="AT5G24530">
    <property type="gene designation" value="DMR6"/>
</dbReference>
<dbReference type="eggNOG" id="KOG0143">
    <property type="taxonomic scope" value="Eukaryota"/>
</dbReference>
<dbReference type="HOGENOM" id="CLU_010119_16_4_1"/>
<dbReference type="InParanoid" id="Q9FLV0"/>
<dbReference type="OMA" id="EHTDYEC"/>
<dbReference type="OrthoDB" id="288590at2759"/>
<dbReference type="PhylomeDB" id="Q9FLV0"/>
<dbReference type="BioCyc" id="ARA:AT5G24530-MONOMER"/>
<dbReference type="PRO" id="PR:Q9FLV0"/>
<dbReference type="Proteomes" id="UP000006548">
    <property type="component" value="Chromosome 5"/>
</dbReference>
<dbReference type="ExpressionAtlas" id="Q9FLV0">
    <property type="expression patterns" value="baseline and differential"/>
</dbReference>
<dbReference type="GO" id="GO:0033759">
    <property type="term" value="F:flavone synthase activity"/>
    <property type="evidence" value="ECO:0000314"/>
    <property type="project" value="TAIR"/>
</dbReference>
<dbReference type="GO" id="GO:0046872">
    <property type="term" value="F:metal ion binding"/>
    <property type="evidence" value="ECO:0007669"/>
    <property type="project" value="UniProtKB-KW"/>
</dbReference>
<dbReference type="GO" id="GO:0034785">
    <property type="term" value="F:salicylate 5-hydroxylase activity"/>
    <property type="evidence" value="ECO:0000314"/>
    <property type="project" value="TAIR"/>
</dbReference>
<dbReference type="GO" id="GO:0071456">
    <property type="term" value="P:cellular response to hypoxia"/>
    <property type="evidence" value="ECO:0007007"/>
    <property type="project" value="TAIR"/>
</dbReference>
<dbReference type="GO" id="GO:0042742">
    <property type="term" value="P:defense response to bacterium"/>
    <property type="evidence" value="ECO:0000315"/>
    <property type="project" value="UniProtKB"/>
</dbReference>
<dbReference type="GO" id="GO:0002229">
    <property type="term" value="P:defense response to oomycetes"/>
    <property type="evidence" value="ECO:0000315"/>
    <property type="project" value="UniProtKB"/>
</dbReference>
<dbReference type="GO" id="GO:0009813">
    <property type="term" value="P:flavonoid biosynthetic process"/>
    <property type="evidence" value="ECO:0000314"/>
    <property type="project" value="TAIR"/>
</dbReference>
<dbReference type="GO" id="GO:0010150">
    <property type="term" value="P:leaf senescence"/>
    <property type="evidence" value="ECO:0000315"/>
    <property type="project" value="TAIR"/>
</dbReference>
<dbReference type="GO" id="GO:0009617">
    <property type="term" value="P:response to bacterium"/>
    <property type="evidence" value="ECO:0000316"/>
    <property type="project" value="TAIR"/>
</dbReference>
<dbReference type="GO" id="GO:0009620">
    <property type="term" value="P:response to fungus"/>
    <property type="evidence" value="ECO:0000316"/>
    <property type="project" value="TAIR"/>
</dbReference>
<dbReference type="GO" id="GO:0002239">
    <property type="term" value="P:response to oomycetes"/>
    <property type="evidence" value="ECO:0000315"/>
    <property type="project" value="UniProtKB"/>
</dbReference>
<dbReference type="GO" id="GO:0009751">
    <property type="term" value="P:response to salicylic acid"/>
    <property type="evidence" value="ECO:0000270"/>
    <property type="project" value="UniProtKB"/>
</dbReference>
<dbReference type="GO" id="GO:0046244">
    <property type="term" value="P:salicylic acid catabolic process"/>
    <property type="evidence" value="ECO:0000250"/>
    <property type="project" value="UniProtKB"/>
</dbReference>
<dbReference type="FunFam" id="2.60.120.330:FF:000007">
    <property type="entry name" value="Protein DMR6-like oxygenase 2"/>
    <property type="match status" value="1"/>
</dbReference>
<dbReference type="Gene3D" id="2.60.120.330">
    <property type="entry name" value="B-lactam Antibiotic, Isopenicillin N Synthase, Chain"/>
    <property type="match status" value="1"/>
</dbReference>
<dbReference type="InterPro" id="IPR026992">
    <property type="entry name" value="DIOX_N"/>
</dbReference>
<dbReference type="InterPro" id="IPR044861">
    <property type="entry name" value="IPNS-like_FE2OG_OXY"/>
</dbReference>
<dbReference type="InterPro" id="IPR027443">
    <property type="entry name" value="IPNS-like_sf"/>
</dbReference>
<dbReference type="InterPro" id="IPR005123">
    <property type="entry name" value="Oxoglu/Fe-dep_dioxygenase_dom"/>
</dbReference>
<dbReference type="InterPro" id="IPR050295">
    <property type="entry name" value="Plant_2OG-oxidoreductases"/>
</dbReference>
<dbReference type="PANTHER" id="PTHR47991">
    <property type="entry name" value="OXOGLUTARATE/IRON-DEPENDENT DIOXYGENASE"/>
    <property type="match status" value="1"/>
</dbReference>
<dbReference type="Pfam" id="PF03171">
    <property type="entry name" value="2OG-FeII_Oxy"/>
    <property type="match status" value="1"/>
</dbReference>
<dbReference type="Pfam" id="PF14226">
    <property type="entry name" value="DIOX_N"/>
    <property type="match status" value="1"/>
</dbReference>
<dbReference type="SUPFAM" id="SSF51197">
    <property type="entry name" value="Clavaminate synthase-like"/>
    <property type="match status" value="1"/>
</dbReference>
<dbReference type="PROSITE" id="PS51471">
    <property type="entry name" value="FE2OG_OXY"/>
    <property type="match status" value="1"/>
</dbReference>
<organism>
    <name type="scientific">Arabidopsis thaliana</name>
    <name type="common">Mouse-ear cress</name>
    <dbReference type="NCBI Taxonomy" id="3702"/>
    <lineage>
        <taxon>Eukaryota</taxon>
        <taxon>Viridiplantae</taxon>
        <taxon>Streptophyta</taxon>
        <taxon>Embryophyta</taxon>
        <taxon>Tracheophyta</taxon>
        <taxon>Spermatophyta</taxon>
        <taxon>Magnoliopsida</taxon>
        <taxon>eudicotyledons</taxon>
        <taxon>Gunneridae</taxon>
        <taxon>Pentapetalae</taxon>
        <taxon>rosids</taxon>
        <taxon>malvids</taxon>
        <taxon>Brassicales</taxon>
        <taxon>Brassicaceae</taxon>
        <taxon>Camelineae</taxon>
        <taxon>Arabidopsis</taxon>
    </lineage>
</organism>
<proteinExistence type="evidence at protein level"/>
<reference key="1">
    <citation type="journal article" date="1998" name="DNA Res.">
        <title>Structural analysis of Arabidopsis thaliana chromosome 5. IV. Sequence features of the regions of 1,456,315 bp covered by nineteen physically assigned P1 and TAC clones.</title>
        <authorList>
            <person name="Sato S."/>
            <person name="Kaneko T."/>
            <person name="Kotani H."/>
            <person name="Nakamura Y."/>
            <person name="Asamizu E."/>
            <person name="Miyajima N."/>
            <person name="Tabata S."/>
        </authorList>
    </citation>
    <scope>NUCLEOTIDE SEQUENCE [LARGE SCALE GENOMIC DNA]</scope>
    <source>
        <strain>cv. Columbia</strain>
    </source>
</reference>
<reference key="2">
    <citation type="journal article" date="2017" name="Plant J.">
        <title>Araport11: a complete reannotation of the Arabidopsis thaliana reference genome.</title>
        <authorList>
            <person name="Cheng C.Y."/>
            <person name="Krishnakumar V."/>
            <person name="Chan A.P."/>
            <person name="Thibaud-Nissen F."/>
            <person name="Schobel S."/>
            <person name="Town C.D."/>
        </authorList>
    </citation>
    <scope>GENOME REANNOTATION</scope>
    <source>
        <strain>cv. Columbia</strain>
    </source>
</reference>
<reference key="3">
    <citation type="journal article" date="2003" name="Science">
        <title>Empirical analysis of transcriptional activity in the Arabidopsis genome.</title>
        <authorList>
            <person name="Yamada K."/>
            <person name="Lim J."/>
            <person name="Dale J.M."/>
            <person name="Chen H."/>
            <person name="Shinn P."/>
            <person name="Palm C.J."/>
            <person name="Southwick A.M."/>
            <person name="Wu H.C."/>
            <person name="Kim C.J."/>
            <person name="Nguyen M."/>
            <person name="Pham P.K."/>
            <person name="Cheuk R.F."/>
            <person name="Karlin-Newmann G."/>
            <person name="Liu S.X."/>
            <person name="Lam B."/>
            <person name="Sakano H."/>
            <person name="Wu T."/>
            <person name="Yu G."/>
            <person name="Miranda M."/>
            <person name="Quach H.L."/>
            <person name="Tripp M."/>
            <person name="Chang C.H."/>
            <person name="Lee J.M."/>
            <person name="Toriumi M.J."/>
            <person name="Chan M.M."/>
            <person name="Tang C.C."/>
            <person name="Onodera C.S."/>
            <person name="Deng J.M."/>
            <person name="Akiyama K."/>
            <person name="Ansari Y."/>
            <person name="Arakawa T."/>
            <person name="Banh J."/>
            <person name="Banno F."/>
            <person name="Bowser L."/>
            <person name="Brooks S.Y."/>
            <person name="Carninci P."/>
            <person name="Chao Q."/>
            <person name="Choy N."/>
            <person name="Enju A."/>
            <person name="Goldsmith A.D."/>
            <person name="Gurjal M."/>
            <person name="Hansen N.F."/>
            <person name="Hayashizaki Y."/>
            <person name="Johnson-Hopson C."/>
            <person name="Hsuan V.W."/>
            <person name="Iida K."/>
            <person name="Karnes M."/>
            <person name="Khan S."/>
            <person name="Koesema E."/>
            <person name="Ishida J."/>
            <person name="Jiang P.X."/>
            <person name="Jones T."/>
            <person name="Kawai J."/>
            <person name="Kamiya A."/>
            <person name="Meyers C."/>
            <person name="Nakajima M."/>
            <person name="Narusaka M."/>
            <person name="Seki M."/>
            <person name="Sakurai T."/>
            <person name="Satou M."/>
            <person name="Tamse R."/>
            <person name="Vaysberg M."/>
            <person name="Wallender E.K."/>
            <person name="Wong C."/>
            <person name="Yamamura Y."/>
            <person name="Yuan S."/>
            <person name="Shinozaki K."/>
            <person name="Davis R.W."/>
            <person name="Theologis A."/>
            <person name="Ecker J.R."/>
        </authorList>
    </citation>
    <scope>NUCLEOTIDE SEQUENCE [LARGE SCALE MRNA]</scope>
    <source>
        <strain>cv. Columbia</strain>
    </source>
</reference>
<reference key="4">
    <citation type="submission" date="2002-03" db="EMBL/GenBank/DDBJ databases">
        <title>Full-length cDNA from Arabidopsis thaliana.</title>
        <authorList>
            <person name="Brover V.V."/>
            <person name="Troukhan M.E."/>
            <person name="Alexandrov N.A."/>
            <person name="Lu Y.-P."/>
            <person name="Flavell R.B."/>
            <person name="Feldmann K.A."/>
        </authorList>
    </citation>
    <scope>NUCLEOTIDE SEQUENCE [LARGE SCALE MRNA]</scope>
</reference>
<reference key="5">
    <citation type="journal article" date="2005" name="Mol. Plant Microbe Interact.">
        <title>Identification of arabidopsis loci required for susceptibility to the downy mildew pathogen Hyaloperonospora parasitica.</title>
        <authorList>
            <person name="Van Damme M."/>
            <person name="Andel A."/>
            <person name="Huibers R.P."/>
            <person name="Panstruga R."/>
            <person name="Weisbeek P.J."/>
            <person name="Van den Ackerveken G."/>
        </authorList>
    </citation>
    <scope>FUNCTION (MICROBIAL INFECTION)</scope>
    <scope>DISRUPTION PHENOTYPE</scope>
    <source>
        <strain>cv. Landsberg erecta</strain>
    </source>
</reference>
<reference key="6">
    <citation type="journal article" date="2008" name="Plant J.">
        <title>Arabidopsis DMR6 encodes a putative 2OG-Fe(II) oxygenase that is defense-associated but required for susceptibility to downy mildew.</title>
        <authorList>
            <person name="van Damme M."/>
            <person name="Huibers R.P."/>
            <person name="Elberse J."/>
            <person name="Van den Ackerveken G."/>
        </authorList>
    </citation>
    <scope>FUNCTION</scope>
    <scope>FUNCTION (MICROBIAL INFECTION)</scope>
    <scope>MUTAGENESIS OF HIS-212 AND HIS-269</scope>
    <scope>DISRUPTION PHENOTYPE</scope>
    <scope>INDUCTION BY HYALOPERONOSPORA ARABIDOPSIDIS AND BTH</scope>
    <source>
        <strain>cv. Columbia</strain>
        <strain>cv. Landsberg erecta</strain>
        <strain>cv. Wassilewskija-4</strain>
    </source>
</reference>
<reference key="7">
    <citation type="journal article" date="2015" name="Plant J.">
        <title>DOWNY MILDEW RESISTANT 6 and DMR6-LIKE OXYGENASE 1 are partially redundant but distinct suppressors of immunity in Arabidopsis.</title>
        <authorList>
            <person name="Zeilmaker T."/>
            <person name="Ludwig N.R."/>
            <person name="Elberse J."/>
            <person name="Seidl M.F."/>
            <person name="Berke L."/>
            <person name="Van Doorn A."/>
            <person name="Schuurink R.C."/>
            <person name="Snel B."/>
            <person name="Van den Ackerveken G."/>
        </authorList>
    </citation>
    <scope>FUNCTION</scope>
    <scope>FUNCTION (MICROBIAL INFECTION)</scope>
    <scope>DISRUPTION PHENOTYPE</scope>
    <scope>MUTAGENESIS OF HIS-212 AND HIS-269</scope>
    <scope>INDUCTION BY PATHOGENS</scope>
    <scope>GENE FAMILY</scope>
    <source>
        <strain>cv. Columbia</strain>
        <strain>cv. Landsberg erecta</strain>
    </source>
</reference>
<gene>
    <name evidence="6" type="primary">DMR6</name>
    <name evidence="9" type="ordered locus">At5g24530</name>
    <name evidence="10" type="ORF">K18P6.6</name>
</gene>
<protein>
    <recommendedName>
        <fullName evidence="6">Protein DOWNY MILDEW RESISTANCE 6</fullName>
        <shortName evidence="6">AtDMR6</shortName>
        <ecNumber evidence="2">1.14.11.-</ecNumber>
    </recommendedName>
    <alternativeName>
        <fullName evidence="7">2-oxoglutarate (2OG)-Fe(II) oxygenase-like protein DMR6</fullName>
    </alternativeName>
    <alternativeName>
        <fullName evidence="8">Salicylate 3-hydroxylase DMR6</fullName>
        <shortName evidence="8">S3H DMR6</shortName>
        <shortName evidence="8">SA 3-hydroxylase DMR6</shortName>
        <shortName evidence="8">Salicylic acid 3-hydroxylase DMR6</shortName>
        <ecNumber evidence="1">1.14.13.-</ecNumber>
    </alternativeName>
</protein>
<evidence type="ECO:0000250" key="1">
    <source>
        <dbReference type="UniProtKB" id="Q9ZSA8"/>
    </source>
</evidence>
<evidence type="ECO:0000255" key="2">
    <source>
        <dbReference type="PROSITE-ProRule" id="PRU00805"/>
    </source>
</evidence>
<evidence type="ECO:0000269" key="3">
    <source>
    </source>
</evidence>
<evidence type="ECO:0000269" key="4">
    <source>
    </source>
</evidence>
<evidence type="ECO:0000269" key="5">
    <source>
    </source>
</evidence>
<evidence type="ECO:0000303" key="6">
    <source>
    </source>
</evidence>
<evidence type="ECO:0000303" key="7">
    <source>
    </source>
</evidence>
<evidence type="ECO:0000305" key="8"/>
<evidence type="ECO:0000312" key="9">
    <source>
        <dbReference type="Araport" id="AT5G24530"/>
    </source>
</evidence>
<evidence type="ECO:0000312" key="10">
    <source>
        <dbReference type="EMBL" id="AAK62420.1"/>
    </source>
</evidence>
<keyword id="KW-0223">Dioxygenase</keyword>
<keyword id="KW-0408">Iron</keyword>
<keyword id="KW-0479">Metal-binding</keyword>
<keyword id="KW-0520">NAD</keyword>
<keyword id="KW-0560">Oxidoreductase</keyword>
<keyword id="KW-0611">Plant defense</keyword>
<keyword id="KW-1185">Reference proteome</keyword>
<accession>Q9FLV0</accession>
<accession>Q8LEJ4</accession>
<sequence length="341" mass="39364">MAAKLISTGFRHTTLPENYVRPISDRPRLSEVSQLEDFPLIDLSSTDRSFLIQQIHQACARFGFFQVINHGVNKQIIDEMVSVAREFFSMSMEEKMKLYSDDPTKTTRLSTSFNVKKEEVNNWRDYLRLHCYPIHKYVNEWPSNPPSFKEIVSKYSREVREVGFKIEELISESLGLEKDYMKKVLGEQGQHMAVNYYPPCPEPELTYGLPAHTDPNALTILLQDTTVCGLQILIDGQWFAVNPHPDAFVINIGDQLQALSNGVYKSVWHRAVTNTENPRLSVASFLCPADCAVMSPAKPLWEAEDDETKPVYKDFTYAEYYKKFWSRNLDQEHCLENFLNN</sequence>
<comment type="function">
    <text evidence="1 4 5">Converts salicylic acid (SA) to 2,3-dihydroxybenzoic acid (2,3-DHBA) (By similarity). Suppressor of immunity. Regulates negatively defense associated genes expression (e.g. PR-1, PR-2, and PR-5) (PubMed:18248595, PubMed:25376907). Negative regulator of defense against Hyaloperonospora arabidopsidis (PubMed:25376907).</text>
</comment>
<comment type="function">
    <text evidence="3 4 5">(Microbial infection) Required for susceptibility to the downy mildew pathogen Hyaloperonospora arabidopsidis.</text>
</comment>
<comment type="function">
    <text evidence="5">(Microbial infection) Required for susceptibility to Pseudomonas syringae pv. tomato DC3000.</text>
</comment>
<comment type="function">
    <text evidence="5">(Microbial infection) Required for susceptibility to the oomycete Phytophthora capsici.</text>
</comment>
<comment type="catalytic activity">
    <reaction evidence="1">
        <text>salicylate + NADH + O2 + H(+) = 2,3-dihydroxybenzoate + NAD(+) + H2O</text>
        <dbReference type="Rhea" id="RHEA:51792"/>
        <dbReference type="ChEBI" id="CHEBI:15377"/>
        <dbReference type="ChEBI" id="CHEBI:15378"/>
        <dbReference type="ChEBI" id="CHEBI:15379"/>
        <dbReference type="ChEBI" id="CHEBI:30762"/>
        <dbReference type="ChEBI" id="CHEBI:36654"/>
        <dbReference type="ChEBI" id="CHEBI:57540"/>
        <dbReference type="ChEBI" id="CHEBI:57945"/>
    </reaction>
</comment>
<comment type="cofactor">
    <cofactor evidence="2">
        <name>Fe(2+)</name>
        <dbReference type="ChEBI" id="CHEBI:29033"/>
    </cofactor>
    <text evidence="2">Binds 1 Fe(2+) ion per subunit.</text>
</comment>
<comment type="induction">
    <text evidence="4 5">Locally induced during infections with both compatible and incompatible Hyaloperonospora arabidopsidis isolates, specifically in cells containing haustoria or directly surrounding the intercellular hyphae (PubMed:18248595, PubMed:25376907). Induced by the salicylic acid analog BTH. Accumulates in constitutive defense mutants (e.g. sid2 and npr1 mutants) (PubMed:18248595). Accumulates upon infection with the downy mildew Hyaloperonospora arabidopsidis, the powdery mildew Erysiphe orontii, and the bacterium Pseudomonas syringae as well as salicylic acid (SA) treatment (PubMed:25376907).</text>
</comment>
<comment type="disruption phenotype">
    <text evidence="3 4 5">In the double mutant eds1-2 dmr6-1 and in dmr6-2, reduced susceptibility to the downy mildew pathogen Hyaloperonospora arabidopsidis (PubMed:15986928, PubMed:18248595, PubMed:25376907). Reduced hyphal growth due to immature haustoria, often with aberrant shapes (PubMed:15986928, PubMed:18248595). Reduced susceptibility to Pseudomonas syringae pv. tomato DC3000 and the oomycete Phytophthora capsici, associated with enhanced defense gene expression and elevated salicylic acid levels (PubMed:25376907). Normal susceptibility to P. syringae pv. tomato and Golovinomyces orontii (PubMed:15986928). Enhanced expression of a subset of defense-associated genes (PubMed:18248595).</text>
</comment>
<comment type="similarity">
    <text evidence="8">Belongs to the iron/ascorbate-dependent oxidoreductase family.</text>
</comment>
<feature type="chain" id="PRO_0000435627" description="Protein DOWNY MILDEW RESISTANCE 6">
    <location>
        <begin position="1"/>
        <end position="341"/>
    </location>
</feature>
<feature type="domain" description="Fe2OG dioxygenase" evidence="2">
    <location>
        <begin position="188"/>
        <end position="288"/>
    </location>
</feature>
<feature type="binding site" evidence="2">
    <location>
        <position position="212"/>
    </location>
    <ligand>
        <name>Fe cation</name>
        <dbReference type="ChEBI" id="CHEBI:24875"/>
    </ligand>
</feature>
<feature type="binding site" evidence="2">
    <location>
        <position position="214"/>
    </location>
    <ligand>
        <name>Fe cation</name>
        <dbReference type="ChEBI" id="CHEBI:24875"/>
    </ligand>
</feature>
<feature type="binding site" evidence="2">
    <location>
        <position position="269"/>
    </location>
    <ligand>
        <name>Fe cation</name>
        <dbReference type="ChEBI" id="CHEBI:24875"/>
    </ligand>
</feature>
<feature type="binding site" evidence="2">
    <location>
        <position position="279"/>
    </location>
    <ligand>
        <name>2-oxoglutarate</name>
        <dbReference type="ChEBI" id="CHEBI:16810"/>
    </ligand>
</feature>
<feature type="mutagenesis site" description="Enhanced susceptibility to H.arabidopsidis." evidence="5">
    <original>H</original>
    <variation>Q</variation>
    <location>
        <position position="212"/>
    </location>
</feature>
<feature type="mutagenesis site" description="Enhanced susceptibility to H.arabidopsidis." evidence="5">
    <original>H</original>
    <variation>D</variation>
    <location>
        <position position="269"/>
    </location>
</feature>
<feature type="sequence conflict" description="In Ref. 4; AAM62620." evidence="8" ref="4">
    <original>I</original>
    <variation>K</variation>
    <location>
        <position position="68"/>
    </location>
</feature>
<feature type="sequence conflict" description="In Ref. 4; AAM62620." evidence="8" ref="4">
    <original>H</original>
    <variation>R</variation>
    <location>
        <position position="269"/>
    </location>
</feature>
<feature type="sequence conflict" description="In Ref. 4; AAM62620." evidence="8" ref="4">
    <original>C</original>
    <variation>F</variation>
    <location>
        <position position="334"/>
    </location>
</feature>
<name>DMR6_ARATH</name>